<comment type="similarity">
    <text evidence="3">Belongs to the glyoxalase I family.</text>
</comment>
<evidence type="ECO:0000250" key="1"/>
<evidence type="ECO:0000255" key="2">
    <source>
        <dbReference type="PROSITE-ProRule" id="PRU01163"/>
    </source>
</evidence>
<evidence type="ECO:0000305" key="3"/>
<sequence length="128" mass="15135">MKLLQIRLLVNDFKKSVEFYKDSLGLPISWLENEMEYALFDNGETKIELLSRETMAEIVGEEKKSLEGEAQSKFLLQFKVEDVDKTYDDLHEKGVKCENKPHDRKEWSARVAHFRDPDHNLIEIYKML</sequence>
<organism>
    <name type="scientific">Bacillus subtilis (strain 168)</name>
    <dbReference type="NCBI Taxonomy" id="224308"/>
    <lineage>
        <taxon>Bacteria</taxon>
        <taxon>Bacillati</taxon>
        <taxon>Bacillota</taxon>
        <taxon>Bacilli</taxon>
        <taxon>Bacillales</taxon>
        <taxon>Bacillaceae</taxon>
        <taxon>Bacillus</taxon>
    </lineage>
</organism>
<dbReference type="EMBL" id="U93875">
    <property type="protein sequence ID" value="AAB80877.1"/>
    <property type="molecule type" value="Genomic_DNA"/>
</dbReference>
<dbReference type="EMBL" id="X92868">
    <property type="protein sequence ID" value="CAA63475.1"/>
    <property type="molecule type" value="Genomic_DNA"/>
</dbReference>
<dbReference type="EMBL" id="AL009126">
    <property type="protein sequence ID" value="CAB14635.1"/>
    <property type="molecule type" value="Genomic_DNA"/>
</dbReference>
<dbReference type="PIR" id="H69970">
    <property type="entry name" value="H69970"/>
</dbReference>
<dbReference type="RefSeq" id="NP_390571.1">
    <property type="nucleotide sequence ID" value="NC_000964.3"/>
</dbReference>
<dbReference type="RefSeq" id="WP_004398984.1">
    <property type="nucleotide sequence ID" value="NZ_OZ025638.1"/>
</dbReference>
<dbReference type="SMR" id="O07918"/>
<dbReference type="FunCoup" id="O07918">
    <property type="interactions" value="32"/>
</dbReference>
<dbReference type="STRING" id="224308.BSU26940"/>
<dbReference type="PaxDb" id="224308-BSU26940"/>
<dbReference type="DNASU" id="937607"/>
<dbReference type="EnsemblBacteria" id="CAB14635">
    <property type="protein sequence ID" value="CAB14635"/>
    <property type="gene ID" value="BSU_26940"/>
</dbReference>
<dbReference type="GeneID" id="937607"/>
<dbReference type="KEGG" id="bsu:BSU26940"/>
<dbReference type="PATRIC" id="fig|224308.179.peg.2926"/>
<dbReference type="eggNOG" id="COG0346">
    <property type="taxonomic scope" value="Bacteria"/>
</dbReference>
<dbReference type="InParanoid" id="O07918"/>
<dbReference type="OrthoDB" id="9796521at2"/>
<dbReference type="PhylomeDB" id="O07918"/>
<dbReference type="BioCyc" id="BSUB:BSU26940-MONOMER"/>
<dbReference type="Proteomes" id="UP000001570">
    <property type="component" value="Chromosome"/>
</dbReference>
<dbReference type="GO" id="GO:0004462">
    <property type="term" value="F:lactoylglutathione lyase activity"/>
    <property type="evidence" value="ECO:0007669"/>
    <property type="project" value="InterPro"/>
</dbReference>
<dbReference type="GO" id="GO:0046872">
    <property type="term" value="F:metal ion binding"/>
    <property type="evidence" value="ECO:0007669"/>
    <property type="project" value="UniProtKB-KW"/>
</dbReference>
<dbReference type="CDD" id="cd07264">
    <property type="entry name" value="VOC_like"/>
    <property type="match status" value="1"/>
</dbReference>
<dbReference type="Gene3D" id="3.10.180.10">
    <property type="entry name" value="2,3-Dihydroxybiphenyl 1,2-Dioxygenase, domain 1"/>
    <property type="match status" value="1"/>
</dbReference>
<dbReference type="InterPro" id="IPR029068">
    <property type="entry name" value="Glyas_Bleomycin-R_OHBP_Dase"/>
</dbReference>
<dbReference type="InterPro" id="IPR004360">
    <property type="entry name" value="Glyas_Fos-R_dOase_dom"/>
</dbReference>
<dbReference type="InterPro" id="IPR018146">
    <property type="entry name" value="Glyoxalase_1_CS"/>
</dbReference>
<dbReference type="InterPro" id="IPR051785">
    <property type="entry name" value="MMCE/EMCE_epimerase"/>
</dbReference>
<dbReference type="InterPro" id="IPR037523">
    <property type="entry name" value="VOC"/>
</dbReference>
<dbReference type="PANTHER" id="PTHR43048">
    <property type="entry name" value="METHYLMALONYL-COA EPIMERASE"/>
    <property type="match status" value="1"/>
</dbReference>
<dbReference type="PANTHER" id="PTHR43048:SF4">
    <property type="entry name" value="RING-CLEAVING DIOXYGENASE-RELATED"/>
    <property type="match status" value="1"/>
</dbReference>
<dbReference type="Pfam" id="PF00903">
    <property type="entry name" value="Glyoxalase"/>
    <property type="match status" value="1"/>
</dbReference>
<dbReference type="SUPFAM" id="SSF54593">
    <property type="entry name" value="Glyoxalase/Bleomycin resistance protein/Dihydroxybiphenyl dioxygenase"/>
    <property type="match status" value="1"/>
</dbReference>
<dbReference type="PROSITE" id="PS00934">
    <property type="entry name" value="GLYOXALASE_I_1"/>
    <property type="match status" value="1"/>
</dbReference>
<dbReference type="PROSITE" id="PS51819">
    <property type="entry name" value="VOC"/>
    <property type="match status" value="1"/>
</dbReference>
<gene>
    <name type="primary">yraH</name>
    <name type="ordered locus">BSU26940</name>
</gene>
<keyword id="KW-0456">Lyase</keyword>
<keyword id="KW-0479">Metal-binding</keyword>
<keyword id="KW-0533">Nickel</keyword>
<keyword id="KW-1185">Reference proteome</keyword>
<reference key="1">
    <citation type="journal article" date="1997" name="Microbiology">
        <title>A 23911 bp region of the Bacillus subtilis genome comprising genes located upstream and downstream of the lev operon.</title>
        <authorList>
            <person name="Parro V."/>
            <person name="San Roman M."/>
            <person name="Galindo I."/>
            <person name="Purnelle B."/>
            <person name="Bolotin A."/>
            <person name="Sorokin A."/>
            <person name="Mellado R.P."/>
        </authorList>
    </citation>
    <scope>NUCLEOTIDE SEQUENCE [GENOMIC DNA]</scope>
    <source>
        <strain>168</strain>
    </source>
</reference>
<reference key="2">
    <citation type="journal article" date="1997" name="Microbiology">
        <title>Sequence of the Bacillus subtilis genome region in the vicinity of the lev operon reveals two new extracytoplasmic function RNA polymerase sigma factors SigV and SigZ.</title>
        <authorList>
            <person name="Sorokin A."/>
            <person name="Bolotin A."/>
            <person name="Purnelle B."/>
            <person name="Hilbert H."/>
            <person name="Lauber J."/>
            <person name="Duesterhoeft A."/>
            <person name="Ehrlich S.D."/>
        </authorList>
    </citation>
    <scope>NUCLEOTIDE SEQUENCE [GENOMIC DNA]</scope>
    <source>
        <strain>168</strain>
    </source>
</reference>
<reference key="3">
    <citation type="journal article" date="1997" name="Nature">
        <title>The complete genome sequence of the Gram-positive bacterium Bacillus subtilis.</title>
        <authorList>
            <person name="Kunst F."/>
            <person name="Ogasawara N."/>
            <person name="Moszer I."/>
            <person name="Albertini A.M."/>
            <person name="Alloni G."/>
            <person name="Azevedo V."/>
            <person name="Bertero M.G."/>
            <person name="Bessieres P."/>
            <person name="Bolotin A."/>
            <person name="Borchert S."/>
            <person name="Borriss R."/>
            <person name="Boursier L."/>
            <person name="Brans A."/>
            <person name="Braun M."/>
            <person name="Brignell S.C."/>
            <person name="Bron S."/>
            <person name="Brouillet S."/>
            <person name="Bruschi C.V."/>
            <person name="Caldwell B."/>
            <person name="Capuano V."/>
            <person name="Carter N.M."/>
            <person name="Choi S.-K."/>
            <person name="Codani J.-J."/>
            <person name="Connerton I.F."/>
            <person name="Cummings N.J."/>
            <person name="Daniel R.A."/>
            <person name="Denizot F."/>
            <person name="Devine K.M."/>
            <person name="Duesterhoeft A."/>
            <person name="Ehrlich S.D."/>
            <person name="Emmerson P.T."/>
            <person name="Entian K.-D."/>
            <person name="Errington J."/>
            <person name="Fabret C."/>
            <person name="Ferrari E."/>
            <person name="Foulger D."/>
            <person name="Fritz C."/>
            <person name="Fujita M."/>
            <person name="Fujita Y."/>
            <person name="Fuma S."/>
            <person name="Galizzi A."/>
            <person name="Galleron N."/>
            <person name="Ghim S.-Y."/>
            <person name="Glaser P."/>
            <person name="Goffeau A."/>
            <person name="Golightly E.J."/>
            <person name="Grandi G."/>
            <person name="Guiseppi G."/>
            <person name="Guy B.J."/>
            <person name="Haga K."/>
            <person name="Haiech J."/>
            <person name="Harwood C.R."/>
            <person name="Henaut A."/>
            <person name="Hilbert H."/>
            <person name="Holsappel S."/>
            <person name="Hosono S."/>
            <person name="Hullo M.-F."/>
            <person name="Itaya M."/>
            <person name="Jones L.-M."/>
            <person name="Joris B."/>
            <person name="Karamata D."/>
            <person name="Kasahara Y."/>
            <person name="Klaerr-Blanchard M."/>
            <person name="Klein C."/>
            <person name="Kobayashi Y."/>
            <person name="Koetter P."/>
            <person name="Koningstein G."/>
            <person name="Krogh S."/>
            <person name="Kumano M."/>
            <person name="Kurita K."/>
            <person name="Lapidus A."/>
            <person name="Lardinois S."/>
            <person name="Lauber J."/>
            <person name="Lazarevic V."/>
            <person name="Lee S.-M."/>
            <person name="Levine A."/>
            <person name="Liu H."/>
            <person name="Masuda S."/>
            <person name="Mauel C."/>
            <person name="Medigue C."/>
            <person name="Medina N."/>
            <person name="Mellado R.P."/>
            <person name="Mizuno M."/>
            <person name="Moestl D."/>
            <person name="Nakai S."/>
            <person name="Noback M."/>
            <person name="Noone D."/>
            <person name="O'Reilly M."/>
            <person name="Ogawa K."/>
            <person name="Ogiwara A."/>
            <person name="Oudega B."/>
            <person name="Park S.-H."/>
            <person name="Parro V."/>
            <person name="Pohl T.M."/>
            <person name="Portetelle D."/>
            <person name="Porwollik S."/>
            <person name="Prescott A.M."/>
            <person name="Presecan E."/>
            <person name="Pujic P."/>
            <person name="Purnelle B."/>
            <person name="Rapoport G."/>
            <person name="Rey M."/>
            <person name="Reynolds S."/>
            <person name="Rieger M."/>
            <person name="Rivolta C."/>
            <person name="Rocha E."/>
            <person name="Roche B."/>
            <person name="Rose M."/>
            <person name="Sadaie Y."/>
            <person name="Sato T."/>
            <person name="Scanlan E."/>
            <person name="Schleich S."/>
            <person name="Schroeter R."/>
            <person name="Scoffone F."/>
            <person name="Sekiguchi J."/>
            <person name="Sekowska A."/>
            <person name="Seror S.J."/>
            <person name="Serror P."/>
            <person name="Shin B.-S."/>
            <person name="Soldo B."/>
            <person name="Sorokin A."/>
            <person name="Tacconi E."/>
            <person name="Takagi T."/>
            <person name="Takahashi H."/>
            <person name="Takemaru K."/>
            <person name="Takeuchi M."/>
            <person name="Tamakoshi A."/>
            <person name="Tanaka T."/>
            <person name="Terpstra P."/>
            <person name="Tognoni A."/>
            <person name="Tosato V."/>
            <person name="Uchiyama S."/>
            <person name="Vandenbol M."/>
            <person name="Vannier F."/>
            <person name="Vassarotti A."/>
            <person name="Viari A."/>
            <person name="Wambutt R."/>
            <person name="Wedler E."/>
            <person name="Wedler H."/>
            <person name="Weitzenegger T."/>
            <person name="Winters P."/>
            <person name="Wipat A."/>
            <person name="Yamamoto H."/>
            <person name="Yamane K."/>
            <person name="Yasumoto K."/>
            <person name="Yata K."/>
            <person name="Yoshida K."/>
            <person name="Yoshikawa H.-F."/>
            <person name="Zumstein E."/>
            <person name="Yoshikawa H."/>
            <person name="Danchin A."/>
        </authorList>
    </citation>
    <scope>NUCLEOTIDE SEQUENCE [LARGE SCALE GENOMIC DNA]</scope>
    <source>
        <strain>168</strain>
    </source>
</reference>
<feature type="chain" id="PRO_0000382691" description="Uncharacterized protein YraH">
    <location>
        <begin position="1"/>
        <end position="128"/>
    </location>
</feature>
<feature type="domain" description="VOC" evidence="2">
    <location>
        <begin position="2"/>
        <end position="127"/>
    </location>
</feature>
<feature type="binding site" evidence="1">
    <location>
        <position position="48"/>
    </location>
    <ligand>
        <name>Ni(2+)</name>
        <dbReference type="ChEBI" id="CHEBI:49786"/>
    </ligand>
</feature>
<feature type="binding site" evidence="1">
    <location>
        <position position="123"/>
    </location>
    <ligand>
        <name>Ni(2+)</name>
        <dbReference type="ChEBI" id="CHEBI:49786"/>
    </ligand>
</feature>
<proteinExistence type="inferred from homology"/>
<accession>O07918</accession>
<accession>Q795Z7</accession>
<name>YRAH_BACSU</name>
<protein>
    <recommendedName>
        <fullName>Uncharacterized protein YraH</fullName>
    </recommendedName>
</protein>